<sequence length="159" mass="17745">MSYPITSPSQFVFLSSVWADPIELLNVCTNSLGNQFQTQQARTTVQKQFSEVWKPFPQSTVRFPGDVYKVYRYNAVLDPLITALLGTFDTRNSIIEVENRQSPTTAETLDATRRVDDATVAIRSAINNLVNELVRGTGLYNQNTFESMSGLVWTSAPAS</sequence>
<accession>P89677</accession>
<evidence type="ECO:0000250" key="1"/>
<evidence type="ECO:0000305" key="2"/>
<organism>
    <name type="scientific">Tomato mosaic virus (strain Kazakh K2)</name>
    <name type="common">ToMV</name>
    <name type="synonym">TMV strain K2</name>
    <dbReference type="NCBI Taxonomy" id="138312"/>
    <lineage>
        <taxon>Viruses</taxon>
        <taxon>Riboviria</taxon>
        <taxon>Orthornavirae</taxon>
        <taxon>Kitrinoviricota</taxon>
        <taxon>Alsuviricetes</taxon>
        <taxon>Martellivirales</taxon>
        <taxon>Virgaviridae</taxon>
        <taxon>Tobamovirus</taxon>
        <taxon>Tomato mosaic virus</taxon>
    </lineage>
</organism>
<protein>
    <recommendedName>
        <fullName>Capsid protein</fullName>
    </recommendedName>
    <alternativeName>
        <fullName>Coat protein</fullName>
    </alternativeName>
</protein>
<dbReference type="EMBL" id="Z92909">
    <property type="protein sequence ID" value="CAB07441.1"/>
    <property type="molecule type" value="Genomic_RNA"/>
</dbReference>
<dbReference type="SMR" id="P89677"/>
<dbReference type="Proteomes" id="UP000008253">
    <property type="component" value="Genome"/>
</dbReference>
<dbReference type="GO" id="GO:0019029">
    <property type="term" value="C:helical viral capsid"/>
    <property type="evidence" value="ECO:0007669"/>
    <property type="project" value="UniProtKB-KW"/>
</dbReference>
<dbReference type="GO" id="GO:0005198">
    <property type="term" value="F:structural molecule activity"/>
    <property type="evidence" value="ECO:0007669"/>
    <property type="project" value="InterPro"/>
</dbReference>
<dbReference type="Gene3D" id="1.20.120.70">
    <property type="entry name" value="Tobacco mosaic virus-like, coat protein"/>
    <property type="match status" value="1"/>
</dbReference>
<dbReference type="InterPro" id="IPR001337">
    <property type="entry name" value="TMV-like_coat"/>
</dbReference>
<dbReference type="InterPro" id="IPR036417">
    <property type="entry name" value="TMV-like_coat_sf"/>
</dbReference>
<dbReference type="Pfam" id="PF00721">
    <property type="entry name" value="TMV_coat"/>
    <property type="match status" value="1"/>
</dbReference>
<dbReference type="SUPFAM" id="SSF47195">
    <property type="entry name" value="TMV-like viral coat proteins"/>
    <property type="match status" value="1"/>
</dbReference>
<proteinExistence type="inferred from homology"/>
<feature type="initiator methionine" description="Removed; by host" evidence="1">
    <location>
        <position position="1"/>
    </location>
</feature>
<feature type="chain" id="PRO_0000144948" description="Capsid protein">
    <location>
        <begin position="2"/>
        <end position="159"/>
    </location>
</feature>
<reference key="1">
    <citation type="journal article" date="1997" name="Mol. Biol. (Mosk.)">
        <title>Properties and structure of the tobacco mosaic virus strain K2 genome.</title>
        <authorList>
            <person name="Belenovich E.V."/>
            <person name="Generozov E.V."/>
            <person name="Novikov V.K."/>
            <person name="Zavriev S.K."/>
        </authorList>
    </citation>
    <scope>NUCLEOTIDE SEQUENCE [GENOMIC RNA]</scope>
</reference>
<gene>
    <name type="primary">CP</name>
</gene>
<comment type="function">
    <text>Capsid protein self-assembles to form rod-shaped virions about 18 nm in diameter with a central canal enclosing the viral genomic RNA.</text>
</comment>
<comment type="subcellular location">
    <subcellularLocation>
        <location evidence="2">Virion</location>
    </subcellularLocation>
</comment>
<comment type="similarity">
    <text evidence="2">Belongs to the virgaviridae capsid protein family.</text>
</comment>
<organismHost>
    <name type="scientific">Antirrhinum majus</name>
    <name type="common">Garden snapdragon</name>
    <dbReference type="NCBI Taxonomy" id="4151"/>
</organismHost>
<organismHost>
    <name type="scientific">Capsicum</name>
    <name type="common">peppers</name>
    <dbReference type="NCBI Taxonomy" id="4071"/>
</organismHost>
<organismHost>
    <name type="scientific">Delphinium</name>
    <dbReference type="NCBI Taxonomy" id="46246"/>
</organismHost>
<organismHost>
    <name type="scientific">Petunia</name>
    <dbReference type="NCBI Taxonomy" id="4101"/>
</organismHost>
<organismHost>
    <name type="scientific">Solanum lycopersicum</name>
    <name type="common">Tomato</name>
    <name type="synonym">Lycopersicon esculentum</name>
    <dbReference type="NCBI Taxonomy" id="4081"/>
</organismHost>
<organismHost>
    <name type="scientific">Tagetes</name>
    <name type="common">marigolds</name>
    <dbReference type="NCBI Taxonomy" id="13707"/>
</organismHost>
<keyword id="KW-0167">Capsid protein</keyword>
<keyword id="KW-1139">Helical capsid protein</keyword>
<keyword id="KW-0946">Virion</keyword>
<name>CAPSD_TOMK2</name>